<comment type="function">
    <text>Trans-acting transcriptional regulator of RuBisCO genes (rbcL1S1) expression.</text>
</comment>
<comment type="similarity">
    <text evidence="2">Belongs to the LysR transcriptional regulatory family.</text>
</comment>
<feature type="chain" id="PRO_0000105748" description="RuBisCO operon transcriptional regulator">
    <location>
        <begin position="1"/>
        <end position="309"/>
    </location>
</feature>
<feature type="domain" description="HTH lysR-type" evidence="1">
    <location>
        <begin position="6"/>
        <end position="63"/>
    </location>
</feature>
<feature type="DNA-binding region" description="H-T-H motif" evidence="1">
    <location>
        <begin position="23"/>
        <end position="42"/>
    </location>
</feature>
<sequence length="309" mass="33924">MSIRHATLHQLKIFAAVARHMSFARAAEELHLTPPALSIQVRQLAEAVGQPLFDQIGKKIYLTAAGEALTSACHDILDRLEYFTQEIAALQGLEKGSLKVATLSTTKYFIPRMLGGFCTEHPGVATVLFIGNREVLLERLARNQDDLYILGQPPEHMNVVAEAFADNPLVVVARLDHPLTQEKDIEPSRLRDVPFILREPGSGTRLAAEKFFEQHGVILKTRMEFGSNEAVKQSVAGGLGITVLSASTIRAELASGKLAILDVRGFPLERKWYAVYPAGKRISPRTKAFMEYLFAASADGENGPSLPKP</sequence>
<gene>
    <name type="primary">rbcR</name>
</gene>
<keyword id="KW-0010">Activator</keyword>
<keyword id="KW-0238">DNA-binding</keyword>
<keyword id="KW-0804">Transcription</keyword>
<keyword id="KW-0805">Transcription regulation</keyword>
<proteinExistence type="inferred from homology"/>
<protein>
    <recommendedName>
        <fullName>RuBisCO operon transcriptional regulator</fullName>
    </recommendedName>
</protein>
<accession>Q06610</accession>
<reference key="1">
    <citation type="journal article" date="1993" name="J. Bacteriol.">
        <title>Specific binding of Thiobacillus ferrooxidans RbcR to the intergenic sequence between the rbc operon and the rbcR gene.</title>
        <authorList>
            <person name="Kusano T."/>
            <person name="Sugawara K."/>
        </authorList>
    </citation>
    <scope>NUCLEOTIDE SEQUENCE [GENOMIC DNA]</scope>
</reference>
<evidence type="ECO:0000255" key="1">
    <source>
        <dbReference type="PROSITE-ProRule" id="PRU00253"/>
    </source>
</evidence>
<evidence type="ECO:0000305" key="2"/>
<name>RBCR_ACIFR</name>
<dbReference type="EMBL" id="D11141">
    <property type="protein sequence ID" value="BAA01917.1"/>
    <property type="molecule type" value="Genomic_DNA"/>
</dbReference>
<dbReference type="PIR" id="B49698">
    <property type="entry name" value="B49698"/>
</dbReference>
<dbReference type="SMR" id="Q06610"/>
<dbReference type="GO" id="GO:0003700">
    <property type="term" value="F:DNA-binding transcription factor activity"/>
    <property type="evidence" value="ECO:0007669"/>
    <property type="project" value="InterPro"/>
</dbReference>
<dbReference type="GO" id="GO:0000976">
    <property type="term" value="F:transcription cis-regulatory region binding"/>
    <property type="evidence" value="ECO:0007669"/>
    <property type="project" value="TreeGrafter"/>
</dbReference>
<dbReference type="CDD" id="cd08419">
    <property type="entry name" value="PBP2_CbbR_RubisCO_like"/>
    <property type="match status" value="1"/>
</dbReference>
<dbReference type="FunFam" id="1.10.10.10:FF:000001">
    <property type="entry name" value="LysR family transcriptional regulator"/>
    <property type="match status" value="1"/>
</dbReference>
<dbReference type="Gene3D" id="3.40.190.290">
    <property type="match status" value="1"/>
</dbReference>
<dbReference type="Gene3D" id="1.10.10.10">
    <property type="entry name" value="Winged helix-like DNA-binding domain superfamily/Winged helix DNA-binding domain"/>
    <property type="match status" value="1"/>
</dbReference>
<dbReference type="InterPro" id="IPR005119">
    <property type="entry name" value="LysR_subst-bd"/>
</dbReference>
<dbReference type="InterPro" id="IPR000847">
    <property type="entry name" value="Tscrpt_reg_HTH_LysR"/>
</dbReference>
<dbReference type="InterPro" id="IPR036388">
    <property type="entry name" value="WH-like_DNA-bd_sf"/>
</dbReference>
<dbReference type="InterPro" id="IPR036390">
    <property type="entry name" value="WH_DNA-bd_sf"/>
</dbReference>
<dbReference type="PANTHER" id="PTHR30126:SF5">
    <property type="entry name" value="HTH-TYPE TRANSCRIPTIONAL ACTIVATOR CMPR"/>
    <property type="match status" value="1"/>
</dbReference>
<dbReference type="PANTHER" id="PTHR30126">
    <property type="entry name" value="HTH-TYPE TRANSCRIPTIONAL REGULATOR"/>
    <property type="match status" value="1"/>
</dbReference>
<dbReference type="Pfam" id="PF00126">
    <property type="entry name" value="HTH_1"/>
    <property type="match status" value="1"/>
</dbReference>
<dbReference type="Pfam" id="PF03466">
    <property type="entry name" value="LysR_substrate"/>
    <property type="match status" value="1"/>
</dbReference>
<dbReference type="PRINTS" id="PR00039">
    <property type="entry name" value="HTHLYSR"/>
</dbReference>
<dbReference type="SUPFAM" id="SSF53850">
    <property type="entry name" value="Periplasmic binding protein-like II"/>
    <property type="match status" value="1"/>
</dbReference>
<dbReference type="SUPFAM" id="SSF46785">
    <property type="entry name" value="Winged helix' DNA-binding domain"/>
    <property type="match status" value="1"/>
</dbReference>
<dbReference type="PROSITE" id="PS50931">
    <property type="entry name" value="HTH_LYSR"/>
    <property type="match status" value="1"/>
</dbReference>
<organism>
    <name type="scientific">Acidithiobacillus ferrooxidans</name>
    <name type="common">Thiobacillus ferrooxidans</name>
    <dbReference type="NCBI Taxonomy" id="920"/>
    <lineage>
        <taxon>Bacteria</taxon>
        <taxon>Pseudomonadati</taxon>
        <taxon>Pseudomonadota</taxon>
        <taxon>Acidithiobacillia</taxon>
        <taxon>Acidithiobacillales</taxon>
        <taxon>Acidithiobacillaceae</taxon>
        <taxon>Acidithiobacillus</taxon>
    </lineage>
</organism>